<keyword id="KW-0227">DNA damage</keyword>
<keyword id="KW-0234">DNA repair</keyword>
<keyword id="KW-1185">Reference proteome</keyword>
<name>MUTL_CAUVN</name>
<reference key="1">
    <citation type="journal article" date="2010" name="J. Bacteriol.">
        <title>The genetic basis of laboratory adaptation in Caulobacter crescentus.</title>
        <authorList>
            <person name="Marks M.E."/>
            <person name="Castro-Rojas C.M."/>
            <person name="Teiling C."/>
            <person name="Du L."/>
            <person name="Kapatral V."/>
            <person name="Walunas T.L."/>
            <person name="Crosson S."/>
        </authorList>
    </citation>
    <scope>NUCLEOTIDE SEQUENCE [LARGE SCALE GENOMIC DNA]</scope>
    <source>
        <strain>NA1000 / CB15N</strain>
    </source>
</reference>
<reference key="2">
    <citation type="journal article" date="1999" name="J. Bacteriol.">
        <title>Identification of a regulator that controls stationary-phase expression of catalase-peroxidase in Caulobacter crescentus.</title>
        <authorList>
            <person name="Rava P.S."/>
            <person name="Somma L."/>
            <person name="Steinman H.M."/>
        </authorList>
    </citation>
    <scope>NUCLEOTIDE SEQUENCE [GENOMIC DNA] OF 112-637</scope>
</reference>
<gene>
    <name type="primary">mutL</name>
    <name type="ordered locus">CCNA_00731</name>
</gene>
<protein>
    <recommendedName>
        <fullName>DNA mismatch repair protein MutL</fullName>
    </recommendedName>
</protein>
<proteinExistence type="inferred from homology"/>
<accession>B8H173</accession>
<accession>Q9RP66</accession>
<comment type="function">
    <text evidence="1">This protein is involved in the repair of mismatches in DNA. It is required for dam-dependent methyl-directed DNA mismatch repair. May act as a 'molecular matchmaker', a protein that promotes the formation of a stable complex between two or more DNA-binding proteins in an ATP-dependent manner without itself being part of a final effector complex (By similarity).</text>
</comment>
<comment type="similarity">
    <text evidence="2">Belongs to the DNA mismatch repair MutL/HexB family.</text>
</comment>
<evidence type="ECO:0000250" key="1"/>
<evidence type="ECO:0000305" key="2"/>
<feature type="chain" id="PRO_0000378296" description="DNA mismatch repair protein MutL">
    <location>
        <begin position="1"/>
        <end position="637"/>
    </location>
</feature>
<organism>
    <name type="scientific">Caulobacter vibrioides (strain NA1000 / CB15N)</name>
    <name type="common">Caulobacter crescentus</name>
    <dbReference type="NCBI Taxonomy" id="565050"/>
    <lineage>
        <taxon>Bacteria</taxon>
        <taxon>Pseudomonadati</taxon>
        <taxon>Pseudomonadota</taxon>
        <taxon>Alphaproteobacteria</taxon>
        <taxon>Caulobacterales</taxon>
        <taxon>Caulobacteraceae</taxon>
        <taxon>Caulobacter</taxon>
    </lineage>
</organism>
<sequence>MPIRRLPPETVNRIAAGEVVERPASAIKELVDNAIDAGATRIEVEAHGGGLTRILVADDGCGLSPEELPVAIERHATSKLAPDADGLWDLLRIHTMGFRGEALPSIGSVARLQISSRAKGAKDAFSILVEGGQVGEVAPAAFPGPHGARIEVRDLFYATPARLKFMKSERAEALAITEEIKRQAMANESVGFSLDIDGRRVLRLPPEHPGPQGRLARLAAVLGREFQENALEIDQTRDGVRLSGFAGLPTYNRGNAAHQYLFVNGRPVRDRLLQGALRAAYADFLARDRHPTAALYVTLETTEVDVNVHPAKAEVRFRDPALVRGLIVGALRHALAGAGHRASTTVAAQALDSIRAQQSPFPGYQPQYQPGPSPAGFSAWREGGWTPPTQRPMDLPGLNEVSARVEPSYGGDLAGVVREAYAAAAFEDRPPTDYPGATAPFDPVDYPLGAARAQVHETYIVAQTRDGMVIVDQHAAHERLVYERMKGEMASGGVTRQTLLLPEVVDLDPAEAERVVARAEELAGLGLVLESFGPGAVLVRETPALLGKTDAAALVRDIADDLAENGQALALKERLEEVCSTMACHGSVRAGRRLNGAEMNALLREMEATPHSGQCNHGRPTYVELKLADIEKLFGRR</sequence>
<dbReference type="EMBL" id="CP001340">
    <property type="protein sequence ID" value="ACL94196.1"/>
    <property type="molecule type" value="Genomic_DNA"/>
</dbReference>
<dbReference type="EMBL" id="AF170912">
    <property type="protein sequence ID" value="AAF01798.1"/>
    <property type="molecule type" value="Genomic_DNA"/>
</dbReference>
<dbReference type="RefSeq" id="WP_010918581.1">
    <property type="nucleotide sequence ID" value="NC_011916.1"/>
</dbReference>
<dbReference type="RefSeq" id="YP_002516104.1">
    <property type="nucleotide sequence ID" value="NC_011916.1"/>
</dbReference>
<dbReference type="SMR" id="B8H173"/>
<dbReference type="GeneID" id="7332818"/>
<dbReference type="KEGG" id="ccs:CCNA_00731"/>
<dbReference type="PATRIC" id="fig|565050.3.peg.721"/>
<dbReference type="HOGENOM" id="CLU_004131_4_2_5"/>
<dbReference type="OrthoDB" id="9763467at2"/>
<dbReference type="PhylomeDB" id="B8H173"/>
<dbReference type="Proteomes" id="UP000001364">
    <property type="component" value="Chromosome"/>
</dbReference>
<dbReference type="GO" id="GO:0032300">
    <property type="term" value="C:mismatch repair complex"/>
    <property type="evidence" value="ECO:0007669"/>
    <property type="project" value="InterPro"/>
</dbReference>
<dbReference type="GO" id="GO:0005524">
    <property type="term" value="F:ATP binding"/>
    <property type="evidence" value="ECO:0007669"/>
    <property type="project" value="InterPro"/>
</dbReference>
<dbReference type="GO" id="GO:0016887">
    <property type="term" value="F:ATP hydrolysis activity"/>
    <property type="evidence" value="ECO:0007669"/>
    <property type="project" value="InterPro"/>
</dbReference>
<dbReference type="GO" id="GO:0140664">
    <property type="term" value="F:ATP-dependent DNA damage sensor activity"/>
    <property type="evidence" value="ECO:0007669"/>
    <property type="project" value="InterPro"/>
</dbReference>
<dbReference type="GO" id="GO:0030983">
    <property type="term" value="F:mismatched DNA binding"/>
    <property type="evidence" value="ECO:0007669"/>
    <property type="project" value="InterPro"/>
</dbReference>
<dbReference type="GO" id="GO:0006298">
    <property type="term" value="P:mismatch repair"/>
    <property type="evidence" value="ECO:0007669"/>
    <property type="project" value="UniProtKB-UniRule"/>
</dbReference>
<dbReference type="CDD" id="cd16926">
    <property type="entry name" value="HATPase_MutL-MLH-PMS-like"/>
    <property type="match status" value="1"/>
</dbReference>
<dbReference type="CDD" id="cd03482">
    <property type="entry name" value="MutL_Trans_MutL"/>
    <property type="match status" value="1"/>
</dbReference>
<dbReference type="FunFam" id="3.30.565.10:FF:000003">
    <property type="entry name" value="DNA mismatch repair endonuclease MutL"/>
    <property type="match status" value="1"/>
</dbReference>
<dbReference type="Gene3D" id="3.30.230.10">
    <property type="match status" value="1"/>
</dbReference>
<dbReference type="Gene3D" id="3.30.565.10">
    <property type="entry name" value="Histidine kinase-like ATPase, C-terminal domain"/>
    <property type="match status" value="1"/>
</dbReference>
<dbReference type="Gene3D" id="3.30.1540.20">
    <property type="entry name" value="MutL, C-terminal domain, dimerisation subdomain"/>
    <property type="match status" value="1"/>
</dbReference>
<dbReference type="Gene3D" id="3.30.1370.100">
    <property type="entry name" value="MutL, C-terminal domain, regulatory subdomain"/>
    <property type="match status" value="1"/>
</dbReference>
<dbReference type="HAMAP" id="MF_00149">
    <property type="entry name" value="DNA_mis_repair"/>
    <property type="match status" value="1"/>
</dbReference>
<dbReference type="InterPro" id="IPR014762">
    <property type="entry name" value="DNA_mismatch_repair_CS"/>
</dbReference>
<dbReference type="InterPro" id="IPR020667">
    <property type="entry name" value="DNA_mismatch_repair_MutL"/>
</dbReference>
<dbReference type="InterPro" id="IPR013507">
    <property type="entry name" value="DNA_mismatch_S5_2-like"/>
</dbReference>
<dbReference type="InterPro" id="IPR036890">
    <property type="entry name" value="HATPase_C_sf"/>
</dbReference>
<dbReference type="InterPro" id="IPR002099">
    <property type="entry name" value="MutL/Mlh/PMS"/>
</dbReference>
<dbReference type="InterPro" id="IPR038973">
    <property type="entry name" value="MutL/Mlh/Pms-like"/>
</dbReference>
<dbReference type="InterPro" id="IPR014790">
    <property type="entry name" value="MutL_C"/>
</dbReference>
<dbReference type="InterPro" id="IPR042120">
    <property type="entry name" value="MutL_C_dimsub"/>
</dbReference>
<dbReference type="InterPro" id="IPR042121">
    <property type="entry name" value="MutL_C_regsub"/>
</dbReference>
<dbReference type="InterPro" id="IPR037198">
    <property type="entry name" value="MutL_C_sf"/>
</dbReference>
<dbReference type="InterPro" id="IPR020568">
    <property type="entry name" value="Ribosomal_Su5_D2-typ_SF"/>
</dbReference>
<dbReference type="InterPro" id="IPR014721">
    <property type="entry name" value="Ribsml_uS5_D2-typ_fold_subgr"/>
</dbReference>
<dbReference type="NCBIfam" id="TIGR00585">
    <property type="entry name" value="mutl"/>
    <property type="match status" value="1"/>
</dbReference>
<dbReference type="NCBIfam" id="NF000953">
    <property type="entry name" value="PRK00095.2-4"/>
    <property type="match status" value="1"/>
</dbReference>
<dbReference type="PANTHER" id="PTHR10073">
    <property type="entry name" value="DNA MISMATCH REPAIR PROTEIN MLH, PMS, MUTL"/>
    <property type="match status" value="1"/>
</dbReference>
<dbReference type="PANTHER" id="PTHR10073:SF12">
    <property type="entry name" value="DNA MISMATCH REPAIR PROTEIN MLH1"/>
    <property type="match status" value="1"/>
</dbReference>
<dbReference type="Pfam" id="PF01119">
    <property type="entry name" value="DNA_mis_repair"/>
    <property type="match status" value="1"/>
</dbReference>
<dbReference type="Pfam" id="PF13589">
    <property type="entry name" value="HATPase_c_3"/>
    <property type="match status" value="1"/>
</dbReference>
<dbReference type="Pfam" id="PF08676">
    <property type="entry name" value="MutL_C"/>
    <property type="match status" value="1"/>
</dbReference>
<dbReference type="SMART" id="SM01340">
    <property type="entry name" value="DNA_mis_repair"/>
    <property type="match status" value="1"/>
</dbReference>
<dbReference type="SMART" id="SM00853">
    <property type="entry name" value="MutL_C"/>
    <property type="match status" value="1"/>
</dbReference>
<dbReference type="SUPFAM" id="SSF55874">
    <property type="entry name" value="ATPase domain of HSP90 chaperone/DNA topoisomerase II/histidine kinase"/>
    <property type="match status" value="1"/>
</dbReference>
<dbReference type="SUPFAM" id="SSF118116">
    <property type="entry name" value="DNA mismatch repair protein MutL"/>
    <property type="match status" value="1"/>
</dbReference>
<dbReference type="SUPFAM" id="SSF54211">
    <property type="entry name" value="Ribosomal protein S5 domain 2-like"/>
    <property type="match status" value="1"/>
</dbReference>
<dbReference type="PROSITE" id="PS00058">
    <property type="entry name" value="DNA_MISMATCH_REPAIR_1"/>
    <property type="match status" value="1"/>
</dbReference>